<accession>B5FR52</accession>
<organism>
    <name type="scientific">Salmonella dublin (strain CT_02021853)</name>
    <dbReference type="NCBI Taxonomy" id="439851"/>
    <lineage>
        <taxon>Bacteria</taxon>
        <taxon>Pseudomonadati</taxon>
        <taxon>Pseudomonadota</taxon>
        <taxon>Gammaproteobacteria</taxon>
        <taxon>Enterobacterales</taxon>
        <taxon>Enterobacteriaceae</taxon>
        <taxon>Salmonella</taxon>
    </lineage>
</organism>
<evidence type="ECO:0000255" key="1">
    <source>
        <dbReference type="HAMAP-Rule" id="MF_00344"/>
    </source>
</evidence>
<comment type="function">
    <text evidence="1">Catalyzes the synthesis of GMP from XMP.</text>
</comment>
<comment type="catalytic activity">
    <reaction evidence="1">
        <text>XMP + L-glutamine + ATP + H2O = GMP + L-glutamate + AMP + diphosphate + 2 H(+)</text>
        <dbReference type="Rhea" id="RHEA:11680"/>
        <dbReference type="ChEBI" id="CHEBI:15377"/>
        <dbReference type="ChEBI" id="CHEBI:15378"/>
        <dbReference type="ChEBI" id="CHEBI:29985"/>
        <dbReference type="ChEBI" id="CHEBI:30616"/>
        <dbReference type="ChEBI" id="CHEBI:33019"/>
        <dbReference type="ChEBI" id="CHEBI:57464"/>
        <dbReference type="ChEBI" id="CHEBI:58115"/>
        <dbReference type="ChEBI" id="CHEBI:58359"/>
        <dbReference type="ChEBI" id="CHEBI:456215"/>
        <dbReference type="EC" id="6.3.5.2"/>
    </reaction>
</comment>
<comment type="pathway">
    <text evidence="1">Purine metabolism; GMP biosynthesis; GMP from XMP (L-Gln route): step 1/1.</text>
</comment>
<comment type="subunit">
    <text evidence="1">Homodimer.</text>
</comment>
<sequence length="525" mass="58686">MTENIHKHRILILDFGSQYTQLVARRVRELGVYCELWAWDVTEAQIRDFNPSGIILSGGPESTTEENSPRAPQYVFEAGVPVFGVCYGMQTMAMQLGGHVEGSNEREFGYAQVEVLTDSALVRGIEDSLTADGKPLLDVWMSHGDKVTAIPSDFVTVASTESCPFAIMANEEKRFYGVQFHPEVTHTRQGMRMLERFVRDICQCEALWTPAKIIDDAVARIREQVGDDKVILGLSGGVDSSVTAMLLHRAIGKNLTCVFVDNGLLRLNEAEQVMDMFGDHFGLNIVHVPAEDRFLSALAGENDPEAKRKIIGRVFVEVFDEEALKLEDVKWLAQGTIYPDVIESAASATGKAHVIKSHHNVGGLPKEMKMGLVEPLKELFKDEVRKIGLELGLPYDMLYRHPFPGPGLGVRVLGEVKKEYCDLLRRADAIFIEELRKADLYDKVSQAFTVFLPVRSVGVMGDGRKYDWVVSLRAVETIDFMTAHWAHLPYDFLGRVSNRIINEVNGISRVVYDISGKPPATIEWE</sequence>
<gene>
    <name evidence="1" type="primary">guaA</name>
    <name type="ordered locus">SeD_A2875</name>
</gene>
<feature type="chain" id="PRO_1000120388" description="GMP synthase [glutamine-hydrolyzing]">
    <location>
        <begin position="1"/>
        <end position="525"/>
    </location>
</feature>
<feature type="domain" description="Glutamine amidotransferase type-1" evidence="1">
    <location>
        <begin position="9"/>
        <end position="207"/>
    </location>
</feature>
<feature type="domain" description="GMPS ATP-PPase" evidence="1">
    <location>
        <begin position="208"/>
        <end position="400"/>
    </location>
</feature>
<feature type="active site" description="Nucleophile" evidence="1">
    <location>
        <position position="86"/>
    </location>
</feature>
<feature type="active site" evidence="1">
    <location>
        <position position="181"/>
    </location>
</feature>
<feature type="active site" evidence="1">
    <location>
        <position position="183"/>
    </location>
</feature>
<feature type="binding site" evidence="1">
    <location>
        <begin position="235"/>
        <end position="241"/>
    </location>
    <ligand>
        <name>ATP</name>
        <dbReference type="ChEBI" id="CHEBI:30616"/>
    </ligand>
</feature>
<dbReference type="EC" id="6.3.5.2" evidence="1"/>
<dbReference type="EMBL" id="CP001144">
    <property type="protein sequence ID" value="ACH77497.1"/>
    <property type="molecule type" value="Genomic_DNA"/>
</dbReference>
<dbReference type="RefSeq" id="WP_000138293.1">
    <property type="nucleotide sequence ID" value="NC_011205.1"/>
</dbReference>
<dbReference type="SMR" id="B5FR52"/>
<dbReference type="MEROPS" id="C26.957"/>
<dbReference type="KEGG" id="sed:SeD_A2875"/>
<dbReference type="HOGENOM" id="CLU_014340_0_5_6"/>
<dbReference type="UniPathway" id="UPA00189">
    <property type="reaction ID" value="UER00296"/>
</dbReference>
<dbReference type="Proteomes" id="UP000008322">
    <property type="component" value="Chromosome"/>
</dbReference>
<dbReference type="GO" id="GO:0005829">
    <property type="term" value="C:cytosol"/>
    <property type="evidence" value="ECO:0007669"/>
    <property type="project" value="TreeGrafter"/>
</dbReference>
<dbReference type="GO" id="GO:0005524">
    <property type="term" value="F:ATP binding"/>
    <property type="evidence" value="ECO:0007669"/>
    <property type="project" value="UniProtKB-UniRule"/>
</dbReference>
<dbReference type="GO" id="GO:0003921">
    <property type="term" value="F:GMP synthase activity"/>
    <property type="evidence" value="ECO:0007669"/>
    <property type="project" value="InterPro"/>
</dbReference>
<dbReference type="CDD" id="cd01742">
    <property type="entry name" value="GATase1_GMP_Synthase"/>
    <property type="match status" value="1"/>
</dbReference>
<dbReference type="CDD" id="cd01997">
    <property type="entry name" value="GMP_synthase_C"/>
    <property type="match status" value="1"/>
</dbReference>
<dbReference type="FunFam" id="3.30.300.10:FF:000002">
    <property type="entry name" value="GMP synthase [glutamine-hydrolyzing]"/>
    <property type="match status" value="1"/>
</dbReference>
<dbReference type="FunFam" id="3.40.50.620:FF:000001">
    <property type="entry name" value="GMP synthase [glutamine-hydrolyzing]"/>
    <property type="match status" value="1"/>
</dbReference>
<dbReference type="FunFam" id="3.40.50.880:FF:000001">
    <property type="entry name" value="GMP synthase [glutamine-hydrolyzing]"/>
    <property type="match status" value="1"/>
</dbReference>
<dbReference type="Gene3D" id="3.30.300.10">
    <property type="match status" value="1"/>
</dbReference>
<dbReference type="Gene3D" id="3.40.50.880">
    <property type="match status" value="1"/>
</dbReference>
<dbReference type="Gene3D" id="3.40.50.620">
    <property type="entry name" value="HUPs"/>
    <property type="match status" value="1"/>
</dbReference>
<dbReference type="HAMAP" id="MF_00344">
    <property type="entry name" value="GMP_synthase"/>
    <property type="match status" value="1"/>
</dbReference>
<dbReference type="InterPro" id="IPR029062">
    <property type="entry name" value="Class_I_gatase-like"/>
</dbReference>
<dbReference type="InterPro" id="IPR017926">
    <property type="entry name" value="GATASE"/>
</dbReference>
<dbReference type="InterPro" id="IPR001674">
    <property type="entry name" value="GMP_synth_C"/>
</dbReference>
<dbReference type="InterPro" id="IPR004739">
    <property type="entry name" value="GMP_synth_GATase"/>
</dbReference>
<dbReference type="InterPro" id="IPR022955">
    <property type="entry name" value="GMP_synthase"/>
</dbReference>
<dbReference type="InterPro" id="IPR025777">
    <property type="entry name" value="GMPS_ATP_PPase_dom"/>
</dbReference>
<dbReference type="InterPro" id="IPR022310">
    <property type="entry name" value="NAD/GMP_synthase"/>
</dbReference>
<dbReference type="InterPro" id="IPR014729">
    <property type="entry name" value="Rossmann-like_a/b/a_fold"/>
</dbReference>
<dbReference type="NCBIfam" id="TIGR00884">
    <property type="entry name" value="guaA_Cterm"/>
    <property type="match status" value="1"/>
</dbReference>
<dbReference type="NCBIfam" id="TIGR00888">
    <property type="entry name" value="guaA_Nterm"/>
    <property type="match status" value="1"/>
</dbReference>
<dbReference type="NCBIfam" id="NF000848">
    <property type="entry name" value="PRK00074.1"/>
    <property type="match status" value="1"/>
</dbReference>
<dbReference type="PANTHER" id="PTHR11922:SF2">
    <property type="entry name" value="GMP SYNTHASE [GLUTAMINE-HYDROLYZING]"/>
    <property type="match status" value="1"/>
</dbReference>
<dbReference type="PANTHER" id="PTHR11922">
    <property type="entry name" value="GMP SYNTHASE-RELATED"/>
    <property type="match status" value="1"/>
</dbReference>
<dbReference type="Pfam" id="PF00117">
    <property type="entry name" value="GATase"/>
    <property type="match status" value="1"/>
</dbReference>
<dbReference type="Pfam" id="PF00958">
    <property type="entry name" value="GMP_synt_C"/>
    <property type="match status" value="1"/>
</dbReference>
<dbReference type="Pfam" id="PF02540">
    <property type="entry name" value="NAD_synthase"/>
    <property type="match status" value="1"/>
</dbReference>
<dbReference type="PRINTS" id="PR00097">
    <property type="entry name" value="ANTSNTHASEII"/>
</dbReference>
<dbReference type="PRINTS" id="PR00099">
    <property type="entry name" value="CPSGATASE"/>
</dbReference>
<dbReference type="PRINTS" id="PR00096">
    <property type="entry name" value="GATASE"/>
</dbReference>
<dbReference type="SUPFAM" id="SSF52402">
    <property type="entry name" value="Adenine nucleotide alpha hydrolases-like"/>
    <property type="match status" value="1"/>
</dbReference>
<dbReference type="SUPFAM" id="SSF52317">
    <property type="entry name" value="Class I glutamine amidotransferase-like"/>
    <property type="match status" value="1"/>
</dbReference>
<dbReference type="SUPFAM" id="SSF54810">
    <property type="entry name" value="GMP synthetase C-terminal dimerisation domain"/>
    <property type="match status" value="1"/>
</dbReference>
<dbReference type="PROSITE" id="PS51273">
    <property type="entry name" value="GATASE_TYPE_1"/>
    <property type="match status" value="1"/>
</dbReference>
<dbReference type="PROSITE" id="PS51553">
    <property type="entry name" value="GMPS_ATP_PPASE"/>
    <property type="match status" value="1"/>
</dbReference>
<proteinExistence type="inferred from homology"/>
<protein>
    <recommendedName>
        <fullName evidence="1">GMP synthase [glutamine-hydrolyzing]</fullName>
        <ecNumber evidence="1">6.3.5.2</ecNumber>
    </recommendedName>
    <alternativeName>
        <fullName evidence="1">GMP synthetase</fullName>
    </alternativeName>
    <alternativeName>
        <fullName evidence="1">Glutamine amidotransferase</fullName>
    </alternativeName>
</protein>
<reference key="1">
    <citation type="journal article" date="2011" name="J. Bacteriol.">
        <title>Comparative genomics of 28 Salmonella enterica isolates: evidence for CRISPR-mediated adaptive sublineage evolution.</title>
        <authorList>
            <person name="Fricke W.F."/>
            <person name="Mammel M.K."/>
            <person name="McDermott P.F."/>
            <person name="Tartera C."/>
            <person name="White D.G."/>
            <person name="Leclerc J.E."/>
            <person name="Ravel J."/>
            <person name="Cebula T.A."/>
        </authorList>
    </citation>
    <scope>NUCLEOTIDE SEQUENCE [LARGE SCALE GENOMIC DNA]</scope>
    <source>
        <strain>CT_02021853</strain>
    </source>
</reference>
<keyword id="KW-0067">ATP-binding</keyword>
<keyword id="KW-0315">Glutamine amidotransferase</keyword>
<keyword id="KW-0332">GMP biosynthesis</keyword>
<keyword id="KW-0436">Ligase</keyword>
<keyword id="KW-0547">Nucleotide-binding</keyword>
<keyword id="KW-0658">Purine biosynthesis</keyword>
<name>GUAA_SALDC</name>